<dbReference type="EMBL" id="X70418">
    <property type="protein sequence ID" value="CAA49858.1"/>
    <property type="molecule type" value="Genomic_DNA"/>
</dbReference>
<dbReference type="PIR" id="JQ2302">
    <property type="entry name" value="JQ2302"/>
</dbReference>
<dbReference type="PIR" id="S31877">
    <property type="entry name" value="S31877"/>
</dbReference>
<dbReference type="RefSeq" id="NP_040322.1">
    <property type="nucleotide sequence ID" value="NC_001359.1"/>
</dbReference>
<dbReference type="GeneID" id="988146"/>
<dbReference type="KEGG" id="vg:988146"/>
<dbReference type="OrthoDB" id="13855at10239"/>
<dbReference type="Proteomes" id="UP000002321">
    <property type="component" value="Genome"/>
</dbReference>
<dbReference type="GO" id="GO:0016032">
    <property type="term" value="P:viral process"/>
    <property type="evidence" value="ECO:0007669"/>
    <property type="project" value="InterPro"/>
</dbReference>
<dbReference type="InterPro" id="IPR000657">
    <property type="entry name" value="Gemini_AL3"/>
</dbReference>
<dbReference type="Pfam" id="PF01407">
    <property type="entry name" value="Gemini_AL3"/>
    <property type="match status" value="1"/>
</dbReference>
<dbReference type="PRINTS" id="PR00231">
    <property type="entry name" value="GEMCOATAL3"/>
</dbReference>
<accession>Q06925</accession>
<name>REN_PHUV</name>
<organism>
    <name type="scientific">Pepper huasteco yellow vein virus</name>
    <name type="common">PHYVV</name>
    <name type="synonym">Pepper huasteco virus</name>
    <dbReference type="NCBI Taxonomy" id="223303"/>
    <lineage>
        <taxon>Viruses</taxon>
        <taxon>Monodnaviria</taxon>
        <taxon>Shotokuvirae</taxon>
        <taxon>Cressdnaviricota</taxon>
        <taxon>Repensiviricetes</taxon>
        <taxon>Geplafuvirales</taxon>
        <taxon>Geminiviridae</taxon>
        <taxon>Begomovirus</taxon>
    </lineage>
</organism>
<gene>
    <name type="ORF">AC3</name>
    <name type="ORF">AL3</name>
</gene>
<keyword id="KW-0945">Host-virus interaction</keyword>
<keyword id="KW-1185">Reference proteome</keyword>
<comment type="function">
    <text evidence="1">Increases viral DNA accumulation. Enhances infectivity and symptom expression (By similarity).</text>
</comment>
<comment type="subunit">
    <text evidence="1">Homooligomer. Interacts with the replication-associated protein (REP). Interacts with host proliferating cell nuclear antigen (PCNA). Interacts with host retinoblastoma-related protein 1 (RBR1), and may thereby deregulate the host cell cycle. Oligomerization and interaction with PCNA are necessary for optimal replication enhancement (By similarity).</text>
</comment>
<comment type="similarity">
    <text evidence="2">Belongs to the geminiviridae replication enhancer protein family.</text>
</comment>
<protein>
    <recommendedName>
        <fullName>Replication enhancer protein</fullName>
        <shortName>REn</shortName>
    </recommendedName>
    <alternativeName>
        <fullName>Protein AC3</fullName>
    </alternativeName>
    <alternativeName>
        <fullName>Protein AL3</fullName>
    </alternativeName>
</protein>
<sequence>MDLRTGVPITAAQAANGVFIWELRNPLYFKIRLVETPMYTRSRVFHIQVRANHNMRTALGLHKAYFNFQVWTTLTTISGQIYLNRFKLLVMFYLDNLGLISVNNVIRAVSFATDKRYVNAVLENHEIIYKLY</sequence>
<evidence type="ECO:0000250" key="1"/>
<evidence type="ECO:0000305" key="2"/>
<feature type="chain" id="PRO_0000222242" description="Replication enhancer protein">
    <location>
        <begin position="1"/>
        <end position="132"/>
    </location>
</feature>
<proteinExistence type="inferred from homology"/>
<reference key="1">
    <citation type="journal article" date="1993" name="J. Gen. Virol.">
        <title>Complete nucleotide sequence of pepper huasteco virus: analysis and comparison with bipartite geminiviruses.</title>
        <authorList>
            <person name="Torres-Pacheco I."/>
            <person name="Garzon-Tiznado J.A."/>
            <person name="Herrera-Estrella L."/>
            <person name="Rivera-Bustamante R.F."/>
        </authorList>
    </citation>
    <scope>NUCLEOTIDE SEQUENCE [GENOMIC DNA]</scope>
</reference>
<organismHost>
    <name type="scientific">Capsicum annuum</name>
    <name type="common">Capsicum pepper</name>
    <dbReference type="NCBI Taxonomy" id="4072"/>
</organismHost>